<evidence type="ECO:0000250" key="1"/>
<evidence type="ECO:0000305" key="2"/>
<protein>
    <recommendedName>
        <fullName>Uncharacterized protein YgeY</fullName>
    </recommendedName>
</protein>
<comment type="cofactor">
    <cofactor evidence="1">
        <name>Zn(2+)</name>
        <dbReference type="ChEBI" id="CHEBI:29105"/>
    </cofactor>
    <cofactor evidence="1">
        <name>Co(2+)</name>
        <dbReference type="ChEBI" id="CHEBI:48828"/>
    </cofactor>
    <text evidence="1">Binds 2 Zn(2+) or Co(2+) ions per subunit.</text>
</comment>
<comment type="similarity">
    <text evidence="2">Belongs to the peptidase M20A family.</text>
</comment>
<organism>
    <name type="scientific">Escherichia coli (strain K12)</name>
    <dbReference type="NCBI Taxonomy" id="83333"/>
    <lineage>
        <taxon>Bacteria</taxon>
        <taxon>Pseudomonadati</taxon>
        <taxon>Pseudomonadota</taxon>
        <taxon>Gammaproteobacteria</taxon>
        <taxon>Enterobacterales</taxon>
        <taxon>Enterobacteriaceae</taxon>
        <taxon>Escherichia</taxon>
    </lineage>
</organism>
<name>YGEY_ECOLI</name>
<dbReference type="EMBL" id="U28375">
    <property type="protein sequence ID" value="AAA83053.1"/>
    <property type="molecule type" value="Genomic_DNA"/>
</dbReference>
<dbReference type="EMBL" id="U00096">
    <property type="protein sequence ID" value="AAC75910.1"/>
    <property type="molecule type" value="Genomic_DNA"/>
</dbReference>
<dbReference type="EMBL" id="AP009048">
    <property type="protein sequence ID" value="BAE76938.1"/>
    <property type="molecule type" value="Genomic_DNA"/>
</dbReference>
<dbReference type="PIR" id="H65070">
    <property type="entry name" value="H65070"/>
</dbReference>
<dbReference type="RefSeq" id="NP_417348.1">
    <property type="nucleotide sequence ID" value="NC_000913.3"/>
</dbReference>
<dbReference type="RefSeq" id="WP_001107125.1">
    <property type="nucleotide sequence ID" value="NZ_STEB01000001.1"/>
</dbReference>
<dbReference type="SMR" id="P65807"/>
<dbReference type="BioGRID" id="4262323">
    <property type="interactions" value="27"/>
</dbReference>
<dbReference type="FunCoup" id="P65807">
    <property type="interactions" value="156"/>
</dbReference>
<dbReference type="IntAct" id="P65807">
    <property type="interactions" value="10"/>
</dbReference>
<dbReference type="STRING" id="511145.b2872"/>
<dbReference type="MEROPS" id="M20.A08"/>
<dbReference type="jPOST" id="P65807"/>
<dbReference type="PaxDb" id="511145-b2872"/>
<dbReference type="EnsemblBacteria" id="AAC75910">
    <property type="protein sequence ID" value="AAC75910"/>
    <property type="gene ID" value="b2872"/>
</dbReference>
<dbReference type="GeneID" id="947360"/>
<dbReference type="KEGG" id="ecj:JW2840"/>
<dbReference type="KEGG" id="eco:b2872"/>
<dbReference type="KEGG" id="ecoc:C3026_15755"/>
<dbReference type="PATRIC" id="fig|1411691.4.peg.3862"/>
<dbReference type="EchoBASE" id="EB2867"/>
<dbReference type="eggNOG" id="COG0624">
    <property type="taxonomic scope" value="Bacteria"/>
</dbReference>
<dbReference type="HOGENOM" id="CLU_021802_2_1_6"/>
<dbReference type="InParanoid" id="P65807"/>
<dbReference type="OMA" id="GTYDQKH"/>
<dbReference type="OrthoDB" id="9809784at2"/>
<dbReference type="PhylomeDB" id="P65807"/>
<dbReference type="BioCyc" id="EcoCyc:G7491-MONOMER"/>
<dbReference type="PRO" id="PR:P65807"/>
<dbReference type="Proteomes" id="UP000000625">
    <property type="component" value="Chromosome"/>
</dbReference>
<dbReference type="GO" id="GO:0008777">
    <property type="term" value="F:acetylornithine deacetylase activity"/>
    <property type="evidence" value="ECO:0000318"/>
    <property type="project" value="GO_Central"/>
</dbReference>
<dbReference type="GO" id="GO:0046872">
    <property type="term" value="F:metal ion binding"/>
    <property type="evidence" value="ECO:0007669"/>
    <property type="project" value="UniProtKB-KW"/>
</dbReference>
<dbReference type="GO" id="GO:0008237">
    <property type="term" value="F:metallopeptidase activity"/>
    <property type="evidence" value="ECO:0007669"/>
    <property type="project" value="UniProtKB-KW"/>
</dbReference>
<dbReference type="GO" id="GO:0006526">
    <property type="term" value="P:L-arginine biosynthetic process"/>
    <property type="evidence" value="ECO:0000318"/>
    <property type="project" value="GO_Central"/>
</dbReference>
<dbReference type="GO" id="GO:0006508">
    <property type="term" value="P:proteolysis"/>
    <property type="evidence" value="ECO:0007669"/>
    <property type="project" value="UniProtKB-KW"/>
</dbReference>
<dbReference type="CDD" id="cd05649">
    <property type="entry name" value="M20_ArgE_DapE-like"/>
    <property type="match status" value="1"/>
</dbReference>
<dbReference type="Gene3D" id="3.30.70.360">
    <property type="match status" value="1"/>
</dbReference>
<dbReference type="Gene3D" id="3.40.630.10">
    <property type="entry name" value="Zn peptidases"/>
    <property type="match status" value="2"/>
</dbReference>
<dbReference type="InterPro" id="IPR001261">
    <property type="entry name" value="ArgE/DapE_CS"/>
</dbReference>
<dbReference type="InterPro" id="IPR036264">
    <property type="entry name" value="Bact_exopeptidase_dim_dom"/>
</dbReference>
<dbReference type="InterPro" id="IPR002933">
    <property type="entry name" value="Peptidase_M20"/>
</dbReference>
<dbReference type="InterPro" id="IPR017706">
    <property type="entry name" value="Peptidase_M20/DapE_YgeY"/>
</dbReference>
<dbReference type="InterPro" id="IPR011650">
    <property type="entry name" value="Peptidase_M20_dimer"/>
</dbReference>
<dbReference type="InterPro" id="IPR050072">
    <property type="entry name" value="Peptidase_M20A"/>
</dbReference>
<dbReference type="NCBIfam" id="NF009555">
    <property type="entry name" value="PRK13004.1"/>
    <property type="match status" value="1"/>
</dbReference>
<dbReference type="NCBIfam" id="TIGR03526">
    <property type="entry name" value="selenium_YgeY"/>
    <property type="match status" value="1"/>
</dbReference>
<dbReference type="PANTHER" id="PTHR43808">
    <property type="entry name" value="ACETYLORNITHINE DEACETYLASE"/>
    <property type="match status" value="1"/>
</dbReference>
<dbReference type="PANTHER" id="PTHR43808:SF31">
    <property type="entry name" value="N-ACETYL-L-CITRULLINE DEACETYLASE"/>
    <property type="match status" value="1"/>
</dbReference>
<dbReference type="Pfam" id="PF07687">
    <property type="entry name" value="M20_dimer"/>
    <property type="match status" value="1"/>
</dbReference>
<dbReference type="Pfam" id="PF01546">
    <property type="entry name" value="Peptidase_M20"/>
    <property type="match status" value="1"/>
</dbReference>
<dbReference type="SUPFAM" id="SSF55031">
    <property type="entry name" value="Bacterial exopeptidase dimerisation domain"/>
    <property type="match status" value="1"/>
</dbReference>
<dbReference type="SUPFAM" id="SSF53187">
    <property type="entry name" value="Zn-dependent exopeptidases"/>
    <property type="match status" value="1"/>
</dbReference>
<dbReference type="PROSITE" id="PS00758">
    <property type="entry name" value="ARGE_DAPE_CPG2_1"/>
    <property type="match status" value="1"/>
</dbReference>
<keyword id="KW-0170">Cobalt</keyword>
<keyword id="KW-0378">Hydrolase</keyword>
<keyword id="KW-0479">Metal-binding</keyword>
<keyword id="KW-0482">Metalloprotease</keyword>
<keyword id="KW-0645">Protease</keyword>
<keyword id="KW-1185">Reference proteome</keyword>
<keyword id="KW-0862">Zinc</keyword>
<sequence>MAKNIPFKLILEKAKDYQADMTRFLRDMVAIPSESCDEKRVVHRIKEEMEKVGFDKVEIDPMGNVLGYIGHGPRLVAMDAHIDTVGIGNIKNWDFDPYEGMETDELIGGRGTSDQEGGMASMVYAGKIIKDLGLEDEYTLLVTGTVQEEDCDGLCWQYIIEQSGIRPEFVVSTEPTDCQVYRGQRGRMEIRIDVQGVSCHGSAPERGDNAIFKMGPILGELQELSQRLGYDEFLGKGTLTVSEIFFTSPSRCAVADSCAVSIDRRLTWGETWEGALDEIRALPAVQKANAVVSMYNYDRPSWTGLVYPTECYFPTWKVEEDHFTVKALVNAYEGLFGKAPVVDKWTFSTNGVSIMGRHGIPVIGFGPGKEPEAHAPNEKTWKSHLVTCAAMYAAIPLSWLATE</sequence>
<gene>
    <name type="primary">ygeY</name>
    <name type="ordered locus">b2872</name>
    <name type="ordered locus">JW2840</name>
</gene>
<proteinExistence type="inferred from homology"/>
<reference key="1">
    <citation type="journal article" date="1997" name="Science">
        <title>The complete genome sequence of Escherichia coli K-12.</title>
        <authorList>
            <person name="Blattner F.R."/>
            <person name="Plunkett G. III"/>
            <person name="Bloch C.A."/>
            <person name="Perna N.T."/>
            <person name="Burland V."/>
            <person name="Riley M."/>
            <person name="Collado-Vides J."/>
            <person name="Glasner J.D."/>
            <person name="Rode C.K."/>
            <person name="Mayhew G.F."/>
            <person name="Gregor J."/>
            <person name="Davis N.W."/>
            <person name="Kirkpatrick H.A."/>
            <person name="Goeden M.A."/>
            <person name="Rose D.J."/>
            <person name="Mau B."/>
            <person name="Shao Y."/>
        </authorList>
    </citation>
    <scope>NUCLEOTIDE SEQUENCE [LARGE SCALE GENOMIC DNA]</scope>
    <source>
        <strain>K12 / MG1655 / ATCC 47076</strain>
    </source>
</reference>
<reference key="2">
    <citation type="journal article" date="2006" name="Mol. Syst. Biol.">
        <title>Highly accurate genome sequences of Escherichia coli K-12 strains MG1655 and W3110.</title>
        <authorList>
            <person name="Hayashi K."/>
            <person name="Morooka N."/>
            <person name="Yamamoto Y."/>
            <person name="Fujita K."/>
            <person name="Isono K."/>
            <person name="Choi S."/>
            <person name="Ohtsubo E."/>
            <person name="Baba T."/>
            <person name="Wanner B.L."/>
            <person name="Mori H."/>
            <person name="Horiuchi T."/>
        </authorList>
    </citation>
    <scope>NUCLEOTIDE SEQUENCE [LARGE SCALE GENOMIC DNA]</scope>
    <source>
        <strain>K12 / W3110 / ATCC 27325 / DSM 5911</strain>
    </source>
</reference>
<feature type="chain" id="PRO_0000185339" description="Uncharacterized protein YgeY">
    <location>
        <begin position="1"/>
        <end position="403"/>
    </location>
</feature>
<feature type="active site" evidence="1">
    <location>
        <position position="83"/>
    </location>
</feature>
<feature type="active site" description="Proton acceptor" evidence="1">
    <location>
        <position position="148"/>
    </location>
</feature>
<feature type="binding site" evidence="1">
    <location>
        <position position="81"/>
    </location>
    <ligand>
        <name>Zn(2+)</name>
        <dbReference type="ChEBI" id="CHEBI:29105"/>
        <label>1</label>
    </ligand>
</feature>
<feature type="binding site" evidence="1">
    <location>
        <position position="114"/>
    </location>
    <ligand>
        <name>Zn(2+)</name>
        <dbReference type="ChEBI" id="CHEBI:29105"/>
        <label>1</label>
    </ligand>
</feature>
<feature type="binding site" evidence="1">
    <location>
        <position position="114"/>
    </location>
    <ligand>
        <name>Zn(2+)</name>
        <dbReference type="ChEBI" id="CHEBI:29105"/>
        <label>2</label>
    </ligand>
</feature>
<feature type="binding site" evidence="1">
    <location>
        <position position="149"/>
    </location>
    <ligand>
        <name>Zn(2+)</name>
        <dbReference type="ChEBI" id="CHEBI:29105"/>
        <label>2</label>
    </ligand>
</feature>
<feature type="binding site" evidence="1">
    <location>
        <position position="174"/>
    </location>
    <ligand>
        <name>Zn(2+)</name>
        <dbReference type="ChEBI" id="CHEBI:29105"/>
        <label>1</label>
    </ligand>
</feature>
<feature type="binding site" evidence="1">
    <location>
        <position position="374"/>
    </location>
    <ligand>
        <name>Zn(2+)</name>
        <dbReference type="ChEBI" id="CHEBI:29105"/>
        <label>2</label>
    </ligand>
</feature>
<accession>P65807</accession>
<accession>Q2M9W8</accession>
<accession>Q46805</accession>